<feature type="chain" id="PRO_0000462212" description="Transcription factor Atf1">
    <location>
        <begin position="1"/>
        <end position="458"/>
    </location>
</feature>
<feature type="domain" description="bZIP" evidence="1">
    <location>
        <begin position="347"/>
        <end position="410"/>
    </location>
</feature>
<feature type="region of interest" description="Basic motif" evidence="1">
    <location>
        <begin position="349"/>
        <end position="378"/>
    </location>
</feature>
<feature type="region of interest" description="Leucine-zipper" evidence="1">
    <location>
        <begin position="389"/>
        <end position="403"/>
    </location>
</feature>
<name>ATF1_PENEN</name>
<dbReference type="EMBL" id="JQFZ01000288">
    <property type="protein sequence ID" value="KGO51371.1"/>
    <property type="molecule type" value="Genomic_DNA"/>
</dbReference>
<dbReference type="RefSeq" id="XP_016594324.1">
    <property type="nucleotide sequence ID" value="XM_016738215.1"/>
</dbReference>
<dbReference type="STRING" id="27334.A0A0A2J9B3"/>
<dbReference type="GeneID" id="27673634"/>
<dbReference type="VEuPathDB" id="FungiDB:PEXP_007640"/>
<dbReference type="HOGENOM" id="CLU_034316_1_0_1"/>
<dbReference type="OrthoDB" id="295274at2759"/>
<dbReference type="PhylomeDB" id="A0A0A2J9B3"/>
<dbReference type="Proteomes" id="UP000030143">
    <property type="component" value="Unassembled WGS sequence"/>
</dbReference>
<dbReference type="GO" id="GO:0005634">
    <property type="term" value="C:nucleus"/>
    <property type="evidence" value="ECO:0007669"/>
    <property type="project" value="UniProtKB-SubCell"/>
</dbReference>
<dbReference type="GO" id="GO:0003700">
    <property type="term" value="F:DNA-binding transcription factor activity"/>
    <property type="evidence" value="ECO:0007669"/>
    <property type="project" value="InterPro"/>
</dbReference>
<dbReference type="CDD" id="cd14687">
    <property type="entry name" value="bZIP_ATF2"/>
    <property type="match status" value="1"/>
</dbReference>
<dbReference type="FunFam" id="1.20.5.170:FF:000053">
    <property type="entry name" value="BZIP transcription factor AtfA"/>
    <property type="match status" value="1"/>
</dbReference>
<dbReference type="Gene3D" id="1.20.5.170">
    <property type="match status" value="1"/>
</dbReference>
<dbReference type="InterPro" id="IPR004827">
    <property type="entry name" value="bZIP"/>
</dbReference>
<dbReference type="InterPro" id="IPR046347">
    <property type="entry name" value="bZIP_sf"/>
</dbReference>
<dbReference type="InterPro" id="IPR051027">
    <property type="entry name" value="bZIP_transcription_factors"/>
</dbReference>
<dbReference type="InterPro" id="IPR021755">
    <property type="entry name" value="TF_Aft1_HRA"/>
</dbReference>
<dbReference type="InterPro" id="IPR021756">
    <property type="entry name" value="TF_Aft1_HRR"/>
</dbReference>
<dbReference type="InterPro" id="IPR020956">
    <property type="entry name" value="TF_Aft1_OSM"/>
</dbReference>
<dbReference type="PANTHER" id="PTHR19304">
    <property type="entry name" value="CYCLIC-AMP RESPONSE ELEMENT BINDING PROTEIN"/>
    <property type="match status" value="1"/>
</dbReference>
<dbReference type="Pfam" id="PF11786">
    <property type="entry name" value="Aft1_HRA"/>
    <property type="match status" value="1"/>
</dbReference>
<dbReference type="Pfam" id="PF11787">
    <property type="entry name" value="Aft1_HRR"/>
    <property type="match status" value="1"/>
</dbReference>
<dbReference type="Pfam" id="PF11785">
    <property type="entry name" value="Aft1_OSA"/>
    <property type="match status" value="1"/>
</dbReference>
<dbReference type="Pfam" id="PF00170">
    <property type="entry name" value="bZIP_1"/>
    <property type="match status" value="1"/>
</dbReference>
<dbReference type="SMART" id="SM00338">
    <property type="entry name" value="BRLZ"/>
    <property type="match status" value="1"/>
</dbReference>
<dbReference type="SUPFAM" id="SSF57959">
    <property type="entry name" value="Leucine zipper domain"/>
    <property type="match status" value="1"/>
</dbReference>
<dbReference type="PROSITE" id="PS50217">
    <property type="entry name" value="BZIP"/>
    <property type="match status" value="1"/>
</dbReference>
<accession>A0A0A2J9B3</accession>
<comment type="function">
    <text evidence="2">Transcription factor that positively regulates vegetative growth, reproduction, and osmotic stress response.</text>
</comment>
<comment type="subcellular location">
    <subcellularLocation>
        <location evidence="1">Nucleus</location>
    </subcellularLocation>
</comment>
<comment type="disruption phenotype">
    <text evidence="2">Enhances the tolerance to oxidative, cell wall, and membrane stresses.</text>
</comment>
<comment type="similarity">
    <text evidence="4">Belongs to the bZIP family.</text>
</comment>
<keyword id="KW-0238">DNA-binding</keyword>
<keyword id="KW-0539">Nucleus</keyword>
<keyword id="KW-1185">Reference proteome</keyword>
<keyword id="KW-0804">Transcription</keyword>
<keyword id="KW-0805">Transcription regulation</keyword>
<keyword id="KW-0843">Virulence</keyword>
<organism>
    <name type="scientific">Penicillium expansum</name>
    <name type="common">Blue mold rot fungus</name>
    <dbReference type="NCBI Taxonomy" id="27334"/>
    <lineage>
        <taxon>Eukaryota</taxon>
        <taxon>Fungi</taxon>
        <taxon>Dikarya</taxon>
        <taxon>Ascomycota</taxon>
        <taxon>Pezizomycotina</taxon>
        <taxon>Eurotiomycetes</taxon>
        <taxon>Eurotiomycetidae</taxon>
        <taxon>Eurotiales</taxon>
        <taxon>Aspergillaceae</taxon>
        <taxon>Penicillium</taxon>
    </lineage>
</organism>
<gene>
    <name evidence="3" type="primary">Atf1</name>
    <name type="ORF">PEX2_009380</name>
</gene>
<protein>
    <recommendedName>
        <fullName evidence="3">Transcription factor Atf1</fullName>
    </recommendedName>
</protein>
<reference key="1">
    <citation type="journal article" date="2015" name="Mol. Plant Microbe Interact.">
        <title>Genome, transcriptome, and functional analyses of Penicillium expansum provide new insights into secondary metabolism and pathogenicity.</title>
        <authorList>
            <person name="Ballester A.R."/>
            <person name="Marcet-Houben M."/>
            <person name="Levin E."/>
            <person name="Sela N."/>
            <person name="Selma-Lazaro C."/>
            <person name="Carmona L."/>
            <person name="Wisniewski M."/>
            <person name="Droby S."/>
            <person name="Gonzalez-Candelas L."/>
            <person name="Gabaldon T."/>
        </authorList>
    </citation>
    <scope>NUCLEOTIDE SEQUENCE [LARGE SCALE GENOMIC DNA]</scope>
    <source>
        <strain>MD-8</strain>
    </source>
</reference>
<reference key="2">
    <citation type="journal article" date="2025" name="Hortic. Res.">
        <title>Chromatin accessibility profile and the role of PeAtf1 transcription factor in the postharvest pathogen Penicillium expansum.</title>
        <authorList>
            <person name="Wang Y."/>
            <person name="Wang K."/>
            <person name="Yang Q."/>
            <person name="Wang Z."/>
            <person name="Su Y."/>
            <person name="Chen X."/>
            <person name="Zhang H."/>
        </authorList>
    </citation>
    <scope>FUNCTION</scope>
    <scope>DISRUPTION PHENOTYPE</scope>
</reference>
<proteinExistence type="inferred from homology"/>
<sequence>MKPPTRSQNRSDSQAASSQKDQKSNVENQTSLAPPPRPGAPTASDTPDYFNSMHNPFSLEPNPFEQSFGGNPADTPGKSLLPSVAALTSPALPGTSSASGYNWNNSLRSGPLSPAMLPGPTGPNDYFDSIGRGFPTPNESSLRTGLTPGGGGSMFPAPSPNSQALLQQLQNGGATPSTIDFHRTALAAKKNNSNAPTSNPNEQEQAAANMDVKPARPADFTQHDAADAANGLFMLAKGGQANNAPMNHAPMSNDTRAAARRVSQNTNGTSAEDASDHEPAKPAKGKGKKNTAKAPAANNRRKAEDAPKGSNKRSKSSMEMPSDMDDEDDEDDDMKQFPMDTKKMTDEEKRRNFLERNRVAALKCRQRKKQWLANLQNKVELFTSENDALTATVTQLREEIVNLKTLLLAHKDCPVSQAQGLGPLMMNGMSAGYDHHGYNMPPNMGMQPGGIPTQGMRR</sequence>
<evidence type="ECO:0000255" key="1">
    <source>
        <dbReference type="PROSITE-ProRule" id="PRU00978"/>
    </source>
</evidence>
<evidence type="ECO:0000269" key="2">
    <source>
    </source>
</evidence>
<evidence type="ECO:0000303" key="3">
    <source>
    </source>
</evidence>
<evidence type="ECO:0000305" key="4"/>